<proteinExistence type="inferred from homology"/>
<accession>Q2SY00</accession>
<gene>
    <name evidence="1" type="primary">rimM</name>
    <name type="ordered locus">BTH_I1662</name>
</gene>
<name>RIMM_BURTA</name>
<dbReference type="EMBL" id="CP000086">
    <property type="protein sequence ID" value="ABC37194.1"/>
    <property type="molecule type" value="Genomic_DNA"/>
</dbReference>
<dbReference type="RefSeq" id="WP_009889891.1">
    <property type="nucleotide sequence ID" value="NZ_CP008785.1"/>
</dbReference>
<dbReference type="SMR" id="Q2SY00"/>
<dbReference type="GeneID" id="45121393"/>
<dbReference type="KEGG" id="bte:BTH_I1662"/>
<dbReference type="HOGENOM" id="CLU_077636_1_0_4"/>
<dbReference type="Proteomes" id="UP000001930">
    <property type="component" value="Chromosome I"/>
</dbReference>
<dbReference type="GO" id="GO:0005737">
    <property type="term" value="C:cytoplasm"/>
    <property type="evidence" value="ECO:0007669"/>
    <property type="project" value="UniProtKB-SubCell"/>
</dbReference>
<dbReference type="GO" id="GO:0005840">
    <property type="term" value="C:ribosome"/>
    <property type="evidence" value="ECO:0007669"/>
    <property type="project" value="InterPro"/>
</dbReference>
<dbReference type="GO" id="GO:0043022">
    <property type="term" value="F:ribosome binding"/>
    <property type="evidence" value="ECO:0007669"/>
    <property type="project" value="InterPro"/>
</dbReference>
<dbReference type="GO" id="GO:0042274">
    <property type="term" value="P:ribosomal small subunit biogenesis"/>
    <property type="evidence" value="ECO:0007669"/>
    <property type="project" value="UniProtKB-UniRule"/>
</dbReference>
<dbReference type="GO" id="GO:0006364">
    <property type="term" value="P:rRNA processing"/>
    <property type="evidence" value="ECO:0007669"/>
    <property type="project" value="UniProtKB-UniRule"/>
</dbReference>
<dbReference type="Gene3D" id="2.30.30.240">
    <property type="entry name" value="PRC-barrel domain"/>
    <property type="match status" value="1"/>
</dbReference>
<dbReference type="Gene3D" id="2.40.30.60">
    <property type="entry name" value="RimM"/>
    <property type="match status" value="1"/>
</dbReference>
<dbReference type="HAMAP" id="MF_00014">
    <property type="entry name" value="Ribosome_mat_RimM"/>
    <property type="match status" value="1"/>
</dbReference>
<dbReference type="InterPro" id="IPR011033">
    <property type="entry name" value="PRC_barrel-like_sf"/>
</dbReference>
<dbReference type="InterPro" id="IPR056792">
    <property type="entry name" value="PRC_RimM"/>
</dbReference>
<dbReference type="InterPro" id="IPR011961">
    <property type="entry name" value="RimM"/>
</dbReference>
<dbReference type="InterPro" id="IPR002676">
    <property type="entry name" value="RimM_N"/>
</dbReference>
<dbReference type="InterPro" id="IPR036976">
    <property type="entry name" value="RimM_N_sf"/>
</dbReference>
<dbReference type="InterPro" id="IPR009000">
    <property type="entry name" value="Transl_B-barrel_sf"/>
</dbReference>
<dbReference type="NCBIfam" id="TIGR02273">
    <property type="entry name" value="16S_RimM"/>
    <property type="match status" value="1"/>
</dbReference>
<dbReference type="PANTHER" id="PTHR33692">
    <property type="entry name" value="RIBOSOME MATURATION FACTOR RIMM"/>
    <property type="match status" value="1"/>
</dbReference>
<dbReference type="PANTHER" id="PTHR33692:SF1">
    <property type="entry name" value="RIBOSOME MATURATION FACTOR RIMM"/>
    <property type="match status" value="1"/>
</dbReference>
<dbReference type="Pfam" id="PF24986">
    <property type="entry name" value="PRC_RimM"/>
    <property type="match status" value="1"/>
</dbReference>
<dbReference type="Pfam" id="PF01782">
    <property type="entry name" value="RimM"/>
    <property type="match status" value="1"/>
</dbReference>
<dbReference type="SUPFAM" id="SSF50346">
    <property type="entry name" value="PRC-barrel domain"/>
    <property type="match status" value="1"/>
</dbReference>
<dbReference type="SUPFAM" id="SSF50447">
    <property type="entry name" value="Translation proteins"/>
    <property type="match status" value="1"/>
</dbReference>
<organism>
    <name type="scientific">Burkholderia thailandensis (strain ATCC 700388 / DSM 13276 / CCUG 48851 / CIP 106301 / E264)</name>
    <dbReference type="NCBI Taxonomy" id="271848"/>
    <lineage>
        <taxon>Bacteria</taxon>
        <taxon>Pseudomonadati</taxon>
        <taxon>Pseudomonadota</taxon>
        <taxon>Betaproteobacteria</taxon>
        <taxon>Burkholderiales</taxon>
        <taxon>Burkholderiaceae</taxon>
        <taxon>Burkholderia</taxon>
        <taxon>pseudomallei group</taxon>
    </lineage>
</organism>
<comment type="function">
    <text evidence="1">An accessory protein needed during the final step in the assembly of 30S ribosomal subunit, possibly for assembly of the head region. Essential for efficient processing of 16S rRNA. May be needed both before and after RbfA during the maturation of 16S rRNA. It has affinity for free ribosomal 30S subunits but not for 70S ribosomes.</text>
</comment>
<comment type="subunit">
    <text evidence="1">Binds ribosomal protein uS19.</text>
</comment>
<comment type="subcellular location">
    <subcellularLocation>
        <location evidence="1">Cytoplasm</location>
    </subcellularLocation>
</comment>
<comment type="domain">
    <text evidence="1">The PRC barrel domain binds ribosomal protein uS19.</text>
</comment>
<comment type="similarity">
    <text evidence="1">Belongs to the RimM family.</text>
</comment>
<reference key="1">
    <citation type="journal article" date="2005" name="BMC Genomics">
        <title>Bacterial genome adaptation to niches: divergence of the potential virulence genes in three Burkholderia species of different survival strategies.</title>
        <authorList>
            <person name="Kim H.S."/>
            <person name="Schell M.A."/>
            <person name="Yu Y."/>
            <person name="Ulrich R.L."/>
            <person name="Sarria S.H."/>
            <person name="Nierman W.C."/>
            <person name="DeShazer D."/>
        </authorList>
    </citation>
    <scope>NUCLEOTIDE SEQUENCE [LARGE SCALE GENOMIC DNA]</scope>
    <source>
        <strain>ATCC 700388 / DSM 13276 / CCUG 48851 / CIP 106301 / E264</strain>
    </source>
</reference>
<feature type="chain" id="PRO_0000244118" description="Ribosome maturation factor RimM">
    <location>
        <begin position="1"/>
        <end position="229"/>
    </location>
</feature>
<feature type="domain" description="PRC barrel" evidence="1">
    <location>
        <begin position="148"/>
        <end position="229"/>
    </location>
</feature>
<feature type="region of interest" description="Disordered" evidence="2">
    <location>
        <begin position="1"/>
        <end position="39"/>
    </location>
</feature>
<sequence length="229" mass="24405">MAGHDSGSAKRGRSPSFGVFVRKPVERAPTKGAGDGAADSEAIRIDAAQPWPDDAVEVGAVVDAYGLKGWVKLVAHAGAGRGGDALLKARDWWLQKGGERKFARVTQAKLHSDAVVAHPAGSVDRDTALALRGFRVFVRRGDFPALAADEFYWVDLIGLDVVNEAGVALGKVADMIDNGVHSIMRVEYPATGKDGRPTTGERLIPFVGVYVKAVEQAAGRIVVDWEADY</sequence>
<protein>
    <recommendedName>
        <fullName evidence="1">Ribosome maturation factor RimM</fullName>
    </recommendedName>
</protein>
<keyword id="KW-0143">Chaperone</keyword>
<keyword id="KW-0963">Cytoplasm</keyword>
<keyword id="KW-0690">Ribosome biogenesis</keyword>
<keyword id="KW-0698">rRNA processing</keyword>
<evidence type="ECO:0000255" key="1">
    <source>
        <dbReference type="HAMAP-Rule" id="MF_00014"/>
    </source>
</evidence>
<evidence type="ECO:0000256" key="2">
    <source>
        <dbReference type="SAM" id="MobiDB-lite"/>
    </source>
</evidence>